<dbReference type="EC" id="2.5.1.47"/>
<dbReference type="EMBL" id="AE000657">
    <property type="protein sequence ID" value="AAC07459.1"/>
    <property type="molecule type" value="Genomic_DNA"/>
</dbReference>
<dbReference type="PIR" id="A70435">
    <property type="entry name" value="A70435"/>
</dbReference>
<dbReference type="RefSeq" id="NP_214072.1">
    <property type="nucleotide sequence ID" value="NC_000918.1"/>
</dbReference>
<dbReference type="SMR" id="O67507"/>
<dbReference type="FunCoup" id="O67507">
    <property type="interactions" value="237"/>
</dbReference>
<dbReference type="STRING" id="224324.aq_1556"/>
<dbReference type="EnsemblBacteria" id="AAC07459">
    <property type="protein sequence ID" value="AAC07459"/>
    <property type="gene ID" value="aq_1556"/>
</dbReference>
<dbReference type="KEGG" id="aae:aq_1556"/>
<dbReference type="PATRIC" id="fig|224324.8.peg.1206"/>
<dbReference type="eggNOG" id="COG0031">
    <property type="taxonomic scope" value="Bacteria"/>
</dbReference>
<dbReference type="HOGENOM" id="CLU_021018_1_0_0"/>
<dbReference type="InParanoid" id="O67507"/>
<dbReference type="OrthoDB" id="9808024at2"/>
<dbReference type="UniPathway" id="UPA00136">
    <property type="reaction ID" value="UER00200"/>
</dbReference>
<dbReference type="Proteomes" id="UP000000798">
    <property type="component" value="Chromosome"/>
</dbReference>
<dbReference type="GO" id="GO:0005737">
    <property type="term" value="C:cytoplasm"/>
    <property type="evidence" value="ECO:0000318"/>
    <property type="project" value="GO_Central"/>
</dbReference>
<dbReference type="GO" id="GO:0004124">
    <property type="term" value="F:cysteine synthase activity"/>
    <property type="evidence" value="ECO:0000318"/>
    <property type="project" value="GO_Central"/>
</dbReference>
<dbReference type="GO" id="GO:0019344">
    <property type="term" value="P:cysteine biosynthetic process"/>
    <property type="evidence" value="ECO:0000318"/>
    <property type="project" value="GO_Central"/>
</dbReference>
<dbReference type="GO" id="GO:0006535">
    <property type="term" value="P:cysteine biosynthetic process from serine"/>
    <property type="evidence" value="ECO:0007669"/>
    <property type="project" value="InterPro"/>
</dbReference>
<dbReference type="CDD" id="cd01561">
    <property type="entry name" value="CBS_like"/>
    <property type="match status" value="1"/>
</dbReference>
<dbReference type="FunFam" id="3.40.50.1100:FF:000006">
    <property type="entry name" value="Cysteine synthase"/>
    <property type="match status" value="1"/>
</dbReference>
<dbReference type="Gene3D" id="3.40.50.1100">
    <property type="match status" value="2"/>
</dbReference>
<dbReference type="InterPro" id="IPR005856">
    <property type="entry name" value="Cys_synth"/>
</dbReference>
<dbReference type="InterPro" id="IPR050214">
    <property type="entry name" value="Cys_Synth/Cystath_Beta-Synth"/>
</dbReference>
<dbReference type="InterPro" id="IPR005858">
    <property type="entry name" value="CysM"/>
</dbReference>
<dbReference type="InterPro" id="IPR001216">
    <property type="entry name" value="P-phosphate_BS"/>
</dbReference>
<dbReference type="InterPro" id="IPR001926">
    <property type="entry name" value="TrpB-like_PALP"/>
</dbReference>
<dbReference type="InterPro" id="IPR036052">
    <property type="entry name" value="TrpB-like_PALP_sf"/>
</dbReference>
<dbReference type="NCBIfam" id="TIGR01136">
    <property type="entry name" value="cysKM"/>
    <property type="match status" value="1"/>
</dbReference>
<dbReference type="NCBIfam" id="TIGR01138">
    <property type="entry name" value="cysM"/>
    <property type="match status" value="1"/>
</dbReference>
<dbReference type="PANTHER" id="PTHR10314">
    <property type="entry name" value="CYSTATHIONINE BETA-SYNTHASE"/>
    <property type="match status" value="1"/>
</dbReference>
<dbReference type="Pfam" id="PF00291">
    <property type="entry name" value="PALP"/>
    <property type="match status" value="1"/>
</dbReference>
<dbReference type="SUPFAM" id="SSF53686">
    <property type="entry name" value="Tryptophan synthase beta subunit-like PLP-dependent enzymes"/>
    <property type="match status" value="1"/>
</dbReference>
<dbReference type="PROSITE" id="PS00901">
    <property type="entry name" value="CYS_SYNTHASE"/>
    <property type="match status" value="1"/>
</dbReference>
<sequence>MSLKSCLMWVLGEHDEPYRKARETILKLVGNTPLVRVKKCLPEDIPEDVEIWAKLESFNPGGSVKDRPALSMFLDALKRGLIKEGKVVIDATSGNTGIALAMVGAALGVPVELAMPANVSEERKKIIKAFGAKLYLTDPLEGTDGAILFVRELVQKYPEKYVYLDQYNNPANWKAHFYSTGIEIWNQTKGRITHFVAGIGTGGTIMGTGRRLKIYNPNIQVIGVQPAYPFHGIEGLKHIESSIKPGIFDETFLDRTIFVETEDAYYWARELAKKDAIFVGQSSGAALWACIQLARELAKKGEKGVIVTVFPDGGEKYLTTALFSDKD</sequence>
<comment type="catalytic activity">
    <reaction>
        <text>O-acetyl-L-serine + hydrogen sulfide = L-cysteine + acetate</text>
        <dbReference type="Rhea" id="RHEA:14829"/>
        <dbReference type="ChEBI" id="CHEBI:29919"/>
        <dbReference type="ChEBI" id="CHEBI:30089"/>
        <dbReference type="ChEBI" id="CHEBI:35235"/>
        <dbReference type="ChEBI" id="CHEBI:58340"/>
        <dbReference type="EC" id="2.5.1.47"/>
    </reaction>
</comment>
<comment type="cofactor">
    <cofactor>
        <name>pyridoxal 5'-phosphate</name>
        <dbReference type="ChEBI" id="CHEBI:597326"/>
    </cofactor>
</comment>
<comment type="pathway">
    <text>Amino-acid biosynthesis; L-cysteine biosynthesis; L-cysteine from L-serine: step 2/2.</text>
</comment>
<comment type="similarity">
    <text evidence="2">Belongs to the cysteine synthase/cystathionine beta-synthase family.</text>
</comment>
<gene>
    <name type="primary">cysM</name>
    <name type="ordered locus">aq_1556</name>
</gene>
<protein>
    <recommendedName>
        <fullName>Cysteine synthase</fullName>
        <shortName>CSase</shortName>
        <ecNumber>2.5.1.47</ecNumber>
    </recommendedName>
    <alternativeName>
        <fullName>O-acetylserine (thiol)-lyase</fullName>
        <shortName>OAS-TL</shortName>
    </alternativeName>
    <alternativeName>
        <fullName>O-acetylserine sulfhydrylase</fullName>
    </alternativeName>
</protein>
<reference key="1">
    <citation type="journal article" date="1998" name="Nature">
        <title>The complete genome of the hyperthermophilic bacterium Aquifex aeolicus.</title>
        <authorList>
            <person name="Deckert G."/>
            <person name="Warren P.V."/>
            <person name="Gaasterland T."/>
            <person name="Young W.G."/>
            <person name="Lenox A.L."/>
            <person name="Graham D.E."/>
            <person name="Overbeek R."/>
            <person name="Snead M.A."/>
            <person name="Keller M."/>
            <person name="Aujay M."/>
            <person name="Huber R."/>
            <person name="Feldman R.A."/>
            <person name="Short J.M."/>
            <person name="Olsen G.J."/>
            <person name="Swanson R.V."/>
        </authorList>
    </citation>
    <scope>NUCLEOTIDE SEQUENCE [LARGE SCALE GENOMIC DNA]</scope>
    <source>
        <strain>VF5</strain>
    </source>
</reference>
<accession>O67507</accession>
<feature type="chain" id="PRO_0000167106" description="Cysteine synthase">
    <location>
        <begin position="1"/>
        <end position="327"/>
    </location>
</feature>
<feature type="binding site" evidence="1">
    <location>
        <position position="95"/>
    </location>
    <ligand>
        <name>pyridoxal 5'-phosphate</name>
        <dbReference type="ChEBI" id="CHEBI:597326"/>
    </ligand>
</feature>
<feature type="binding site" evidence="1">
    <location>
        <begin position="200"/>
        <end position="204"/>
    </location>
    <ligand>
        <name>pyridoxal 5'-phosphate</name>
        <dbReference type="ChEBI" id="CHEBI:597326"/>
    </ligand>
</feature>
<feature type="binding site" evidence="1">
    <location>
        <position position="282"/>
    </location>
    <ligand>
        <name>pyridoxal 5'-phosphate</name>
        <dbReference type="ChEBI" id="CHEBI:597326"/>
    </ligand>
</feature>
<feature type="modified residue" description="N6-(pyridoxal phosphate)lysine" evidence="1">
    <location>
        <position position="65"/>
    </location>
</feature>
<name>CYSM_AQUAE</name>
<keyword id="KW-0028">Amino-acid biosynthesis</keyword>
<keyword id="KW-0198">Cysteine biosynthesis</keyword>
<keyword id="KW-0663">Pyridoxal phosphate</keyword>
<keyword id="KW-1185">Reference proteome</keyword>
<keyword id="KW-0808">Transferase</keyword>
<proteinExistence type="inferred from homology"/>
<organism>
    <name type="scientific">Aquifex aeolicus (strain VF5)</name>
    <dbReference type="NCBI Taxonomy" id="224324"/>
    <lineage>
        <taxon>Bacteria</taxon>
        <taxon>Pseudomonadati</taxon>
        <taxon>Aquificota</taxon>
        <taxon>Aquificia</taxon>
        <taxon>Aquificales</taxon>
        <taxon>Aquificaceae</taxon>
        <taxon>Aquifex</taxon>
    </lineage>
</organism>
<evidence type="ECO:0000250" key="1"/>
<evidence type="ECO:0000305" key="2"/>